<evidence type="ECO:0000255" key="1">
    <source>
        <dbReference type="HAMAP-Rule" id="MF_01297"/>
    </source>
</evidence>
<evidence type="ECO:0000256" key="2">
    <source>
        <dbReference type="SAM" id="MobiDB-lite"/>
    </source>
</evidence>
<evidence type="ECO:0000305" key="3"/>
<gene>
    <name type="ordered locus">jk0374</name>
</gene>
<keyword id="KW-1185">Reference proteome</keyword>
<organism>
    <name type="scientific">Corynebacterium jeikeium (strain K411)</name>
    <dbReference type="NCBI Taxonomy" id="306537"/>
    <lineage>
        <taxon>Bacteria</taxon>
        <taxon>Bacillati</taxon>
        <taxon>Actinomycetota</taxon>
        <taxon>Actinomycetes</taxon>
        <taxon>Mycobacteriales</taxon>
        <taxon>Corynebacteriaceae</taxon>
        <taxon>Corynebacterium</taxon>
    </lineage>
</organism>
<sequence length="213" mass="23597">MAEEENKKFKVNANDAVNLAAEQSKSTSDKNLPEFGDMPIPDDTANLRKGPNLHDGLLALLPLIGVWRGQGQAAPPGEEEFTFGQQVVFAHDGENRISYDSRTWRMDDDGKPTEIPDRRESGFLRINDDDEIEMILTHSDGMVEILYGSPLNERAWQLESASTMATATGPTNLGPGKRLYGLMPNNDLGWVDERLIDGEMVPWQSAQLSRVVG</sequence>
<reference key="1">
    <citation type="journal article" date="2005" name="J. Bacteriol.">
        <title>Complete genome sequence and analysis of the multiresistant nosocomial pathogen Corynebacterium jeikeium K411, a lipid-requiring bacterium of the human skin flora.</title>
        <authorList>
            <person name="Tauch A."/>
            <person name="Kaiser O."/>
            <person name="Hain T."/>
            <person name="Goesmann A."/>
            <person name="Weisshaar B."/>
            <person name="Albersmeier A."/>
            <person name="Bekel T."/>
            <person name="Bischoff N."/>
            <person name="Brune I."/>
            <person name="Chakraborty T."/>
            <person name="Kalinowski J."/>
            <person name="Meyer F."/>
            <person name="Rupp O."/>
            <person name="Schneiker S."/>
            <person name="Viehoever P."/>
            <person name="Puehler A."/>
        </authorList>
    </citation>
    <scope>NUCLEOTIDE SEQUENCE [LARGE SCALE GENOMIC DNA]</scope>
    <source>
        <strain>K411</strain>
    </source>
</reference>
<dbReference type="EMBL" id="CR931997">
    <property type="protein sequence ID" value="CAI36526.1"/>
    <property type="molecule type" value="Genomic_DNA"/>
</dbReference>
<dbReference type="RefSeq" id="WP_011273076.1">
    <property type="nucleotide sequence ID" value="NC_007164.1"/>
</dbReference>
<dbReference type="SMR" id="Q4JXD1"/>
<dbReference type="STRING" id="306537.jk0374"/>
<dbReference type="KEGG" id="cjk:jk0374"/>
<dbReference type="PATRIC" id="fig|306537.10.peg.386"/>
<dbReference type="eggNOG" id="COG4044">
    <property type="taxonomic scope" value="Bacteria"/>
</dbReference>
<dbReference type="HOGENOM" id="CLU_085483_0_0_11"/>
<dbReference type="OrthoDB" id="4804006at2"/>
<dbReference type="Proteomes" id="UP000000545">
    <property type="component" value="Chromosome"/>
</dbReference>
<dbReference type="CDD" id="cd07828">
    <property type="entry name" value="lipocalin_heme-bd-THAP4-like"/>
    <property type="match status" value="1"/>
</dbReference>
<dbReference type="Gene3D" id="2.40.128.20">
    <property type="match status" value="1"/>
</dbReference>
<dbReference type="HAMAP" id="MF_01297">
    <property type="entry name" value="nitrobindin"/>
    <property type="match status" value="1"/>
</dbReference>
<dbReference type="InterPro" id="IPR012674">
    <property type="entry name" value="Calycin"/>
</dbReference>
<dbReference type="InterPro" id="IPR022939">
    <property type="entry name" value="Nb(III)_bact/plant"/>
</dbReference>
<dbReference type="InterPro" id="IPR045165">
    <property type="entry name" value="Nitrobindin"/>
</dbReference>
<dbReference type="InterPro" id="IPR014878">
    <property type="entry name" value="THAP4-like_heme-bd"/>
</dbReference>
<dbReference type="PANTHER" id="PTHR15854:SF4">
    <property type="entry name" value="PEROXYNITRITE ISOMERASE THAP4"/>
    <property type="match status" value="1"/>
</dbReference>
<dbReference type="PANTHER" id="PTHR15854">
    <property type="entry name" value="THAP4 PROTEIN"/>
    <property type="match status" value="1"/>
</dbReference>
<dbReference type="Pfam" id="PF08768">
    <property type="entry name" value="THAP4_heme-bd"/>
    <property type="match status" value="1"/>
</dbReference>
<dbReference type="SUPFAM" id="SSF50814">
    <property type="entry name" value="Lipocalins"/>
    <property type="match status" value="1"/>
</dbReference>
<name>NBLIK_CORJK</name>
<protein>
    <recommendedName>
        <fullName evidence="3">Ferric nitrobindin-like protein</fullName>
    </recommendedName>
</protein>
<comment type="similarity">
    <text evidence="1">Belongs to the nitrobindin family.</text>
</comment>
<comment type="caution">
    <text evidence="3">Lacks the conserved His residue that binds heme iron in the nitrobindin family.</text>
</comment>
<accession>Q4JXD1</accession>
<proteinExistence type="inferred from homology"/>
<feature type="chain" id="PRO_0000356903" description="Ferric nitrobindin-like protein">
    <location>
        <begin position="1"/>
        <end position="213"/>
    </location>
</feature>
<feature type="region of interest" description="Disordered" evidence="2">
    <location>
        <begin position="17"/>
        <end position="42"/>
    </location>
</feature>
<feature type="short sequence motif" description="GXWXGXG" evidence="1">
    <location>
        <begin position="65"/>
        <end position="71"/>
    </location>
</feature>